<gene>
    <name evidence="1" type="primary">hisA</name>
    <name type="ordered locus">RHE_CH00043</name>
</gene>
<accession>Q2KE60</accession>
<feature type="chain" id="PRO_0000290519" description="1-(5-phosphoribosyl)-5-[(5-phosphoribosylamino)methylideneamino] imidazole-4-carboxamide isomerase">
    <location>
        <begin position="1"/>
        <end position="248"/>
    </location>
</feature>
<feature type="active site" description="Proton acceptor" evidence="1">
    <location>
        <position position="8"/>
    </location>
</feature>
<feature type="active site" description="Proton donor" evidence="1">
    <location>
        <position position="129"/>
    </location>
</feature>
<proteinExistence type="inferred from homology"/>
<comment type="catalytic activity">
    <reaction evidence="1">
        <text>1-(5-phospho-beta-D-ribosyl)-5-[(5-phospho-beta-D-ribosylamino)methylideneamino]imidazole-4-carboxamide = 5-[(5-phospho-1-deoxy-D-ribulos-1-ylimino)methylamino]-1-(5-phospho-beta-D-ribosyl)imidazole-4-carboxamide</text>
        <dbReference type="Rhea" id="RHEA:15469"/>
        <dbReference type="ChEBI" id="CHEBI:58435"/>
        <dbReference type="ChEBI" id="CHEBI:58525"/>
        <dbReference type="EC" id="5.3.1.16"/>
    </reaction>
</comment>
<comment type="pathway">
    <text evidence="1">Amino-acid biosynthesis; L-histidine biosynthesis; L-histidine from 5-phospho-alpha-D-ribose 1-diphosphate: step 4/9.</text>
</comment>
<comment type="subcellular location">
    <subcellularLocation>
        <location evidence="1">Cytoplasm</location>
    </subcellularLocation>
</comment>
<comment type="similarity">
    <text evidence="1">Belongs to the HisA/HisF family.</text>
</comment>
<comment type="sequence caution" evidence="2">
    <conflict type="erroneous initiation">
        <sequence resource="EMBL-CDS" id="ABC88876"/>
    </conflict>
</comment>
<name>HIS4_RHIEC</name>
<organism>
    <name type="scientific">Rhizobium etli (strain ATCC 51251 / DSM 11541 / JCM 21823 / NBRC 15573 / CFN 42)</name>
    <dbReference type="NCBI Taxonomy" id="347834"/>
    <lineage>
        <taxon>Bacteria</taxon>
        <taxon>Pseudomonadati</taxon>
        <taxon>Pseudomonadota</taxon>
        <taxon>Alphaproteobacteria</taxon>
        <taxon>Hyphomicrobiales</taxon>
        <taxon>Rhizobiaceae</taxon>
        <taxon>Rhizobium/Agrobacterium group</taxon>
        <taxon>Rhizobium</taxon>
    </lineage>
</organism>
<evidence type="ECO:0000255" key="1">
    <source>
        <dbReference type="HAMAP-Rule" id="MF_01014"/>
    </source>
</evidence>
<evidence type="ECO:0000305" key="2"/>
<dbReference type="EC" id="5.3.1.16" evidence="1"/>
<dbReference type="EMBL" id="CP000133">
    <property type="protein sequence ID" value="ABC88876.1"/>
    <property type="status" value="ALT_INIT"/>
    <property type="molecule type" value="Genomic_DNA"/>
</dbReference>
<dbReference type="RefSeq" id="WP_011423447.1">
    <property type="nucleotide sequence ID" value="NC_007761.1"/>
</dbReference>
<dbReference type="SMR" id="Q2KE60"/>
<dbReference type="KEGG" id="ret:RHE_CH00043"/>
<dbReference type="eggNOG" id="COG0106">
    <property type="taxonomic scope" value="Bacteria"/>
</dbReference>
<dbReference type="HOGENOM" id="CLU_048577_1_1_5"/>
<dbReference type="OrthoDB" id="9807749at2"/>
<dbReference type="UniPathway" id="UPA00031">
    <property type="reaction ID" value="UER00009"/>
</dbReference>
<dbReference type="Proteomes" id="UP000001936">
    <property type="component" value="Chromosome"/>
</dbReference>
<dbReference type="GO" id="GO:0005737">
    <property type="term" value="C:cytoplasm"/>
    <property type="evidence" value="ECO:0007669"/>
    <property type="project" value="UniProtKB-SubCell"/>
</dbReference>
<dbReference type="GO" id="GO:0003949">
    <property type="term" value="F:1-(5-phosphoribosyl)-5-[(5-phosphoribosylamino)methylideneamino]imidazole-4-carboxamide isomerase activity"/>
    <property type="evidence" value="ECO:0007669"/>
    <property type="project" value="UniProtKB-UniRule"/>
</dbReference>
<dbReference type="GO" id="GO:0000105">
    <property type="term" value="P:L-histidine biosynthetic process"/>
    <property type="evidence" value="ECO:0007669"/>
    <property type="project" value="UniProtKB-UniRule"/>
</dbReference>
<dbReference type="GO" id="GO:0000162">
    <property type="term" value="P:L-tryptophan biosynthetic process"/>
    <property type="evidence" value="ECO:0007669"/>
    <property type="project" value="TreeGrafter"/>
</dbReference>
<dbReference type="CDD" id="cd04732">
    <property type="entry name" value="HisA"/>
    <property type="match status" value="1"/>
</dbReference>
<dbReference type="FunFam" id="3.20.20.70:FF:000009">
    <property type="entry name" value="1-(5-phosphoribosyl)-5-[(5-phosphoribosylamino)methylideneamino] imidazole-4-carboxamide isomerase"/>
    <property type="match status" value="1"/>
</dbReference>
<dbReference type="Gene3D" id="3.20.20.70">
    <property type="entry name" value="Aldolase class I"/>
    <property type="match status" value="1"/>
</dbReference>
<dbReference type="HAMAP" id="MF_01014">
    <property type="entry name" value="HisA"/>
    <property type="match status" value="1"/>
</dbReference>
<dbReference type="InterPro" id="IPR013785">
    <property type="entry name" value="Aldolase_TIM"/>
</dbReference>
<dbReference type="InterPro" id="IPR006062">
    <property type="entry name" value="His_biosynth"/>
</dbReference>
<dbReference type="InterPro" id="IPR006063">
    <property type="entry name" value="HisA_bact_arch"/>
</dbReference>
<dbReference type="InterPro" id="IPR044524">
    <property type="entry name" value="Isoase_HisA-like"/>
</dbReference>
<dbReference type="InterPro" id="IPR023016">
    <property type="entry name" value="Isoase_HisA-like_bact"/>
</dbReference>
<dbReference type="InterPro" id="IPR001763">
    <property type="entry name" value="Rhodanese-like_dom"/>
</dbReference>
<dbReference type="InterPro" id="IPR011060">
    <property type="entry name" value="RibuloseP-bd_barrel"/>
</dbReference>
<dbReference type="NCBIfam" id="TIGR00007">
    <property type="entry name" value="1-(5-phosphoribosyl)-5-[(5-phosphoribosylamino)methylideneamino]imidazole-4-carboxamide isomerase"/>
    <property type="match status" value="1"/>
</dbReference>
<dbReference type="NCBIfam" id="NF010112">
    <property type="entry name" value="PRK13585.1"/>
    <property type="match status" value="1"/>
</dbReference>
<dbReference type="PANTHER" id="PTHR43090">
    <property type="entry name" value="1-(5-PHOSPHORIBOSYL)-5-[(5-PHOSPHORIBOSYLAMINO)METHYLIDENEAMINO] IMIDAZOLE-4-CARBOXAMIDE ISOMERASE"/>
    <property type="match status" value="1"/>
</dbReference>
<dbReference type="PANTHER" id="PTHR43090:SF2">
    <property type="entry name" value="1-(5-PHOSPHORIBOSYL)-5-[(5-PHOSPHORIBOSYLAMINO)METHYLIDENEAMINO] IMIDAZOLE-4-CARBOXAMIDE ISOMERASE"/>
    <property type="match status" value="1"/>
</dbReference>
<dbReference type="Pfam" id="PF00977">
    <property type="entry name" value="His_biosynth"/>
    <property type="match status" value="1"/>
</dbReference>
<dbReference type="SUPFAM" id="SSF51366">
    <property type="entry name" value="Ribulose-phoshate binding barrel"/>
    <property type="match status" value="1"/>
</dbReference>
<keyword id="KW-0028">Amino-acid biosynthesis</keyword>
<keyword id="KW-0963">Cytoplasm</keyword>
<keyword id="KW-0368">Histidine biosynthesis</keyword>
<keyword id="KW-0413">Isomerase</keyword>
<keyword id="KW-1185">Reference proteome</keyword>
<reference key="1">
    <citation type="journal article" date="2006" name="Proc. Natl. Acad. Sci. U.S.A.">
        <title>The partitioned Rhizobium etli genome: genetic and metabolic redundancy in seven interacting replicons.</title>
        <authorList>
            <person name="Gonzalez V."/>
            <person name="Santamaria R.I."/>
            <person name="Bustos P."/>
            <person name="Hernandez-Gonzalez I."/>
            <person name="Medrano-Soto A."/>
            <person name="Moreno-Hagelsieb G."/>
            <person name="Janga S.C."/>
            <person name="Ramirez M.A."/>
            <person name="Jimenez-Jacinto V."/>
            <person name="Collado-Vides J."/>
            <person name="Davila G."/>
        </authorList>
    </citation>
    <scope>NUCLEOTIDE SEQUENCE [LARGE SCALE GENOMIC DNA]</scope>
    <source>
        <strain>ATCC 51251 / DSM 11541 / JCM 21823 / NBRC 15573 / CFN 42</strain>
    </source>
</reference>
<sequence length="248" mass="26307">MILFPAIDLKGGQCVRLKLGDMQQATVYNTDPAAQAKSFEDQGFEWLHVVDLDGAFAGHSANGDAVEAILKATKNPVQLGGGIRTLDHIEAWLSRGLRRVILGTVAVRNPELVIEACRKFPGRVAVGIDAKGGKVAVEGWAEASELGIIELAKKFEGAGVAAIIYTDIDRDGILTGINWSSTLELADAVSIPVIASGGLASLNDIKRMLQPDARKLEGAISGRALYDGRIDPKEALALINANRAKETA</sequence>
<protein>
    <recommendedName>
        <fullName evidence="1">1-(5-phosphoribosyl)-5-[(5-phosphoribosylamino)methylideneamino] imidazole-4-carboxamide isomerase</fullName>
        <ecNumber evidence="1">5.3.1.16</ecNumber>
    </recommendedName>
    <alternativeName>
        <fullName evidence="1">Phosphoribosylformimino-5-aminoimidazole carboxamide ribotide isomerase</fullName>
    </alternativeName>
</protein>